<gene>
    <name type="ORF">F35D11.3</name>
</gene>
<comment type="subcellular location">
    <subcellularLocation>
        <location evidence="3">Membrane</location>
        <topology evidence="3">Multi-pass membrane protein</topology>
    </subcellularLocation>
</comment>
<comment type="similarity">
    <text evidence="3">Belongs to the TMCO4 family.</text>
</comment>
<evidence type="ECO:0000255" key="1"/>
<evidence type="ECO:0000256" key="2">
    <source>
        <dbReference type="SAM" id="MobiDB-lite"/>
    </source>
</evidence>
<evidence type="ECO:0000305" key="3"/>
<protein>
    <recommendedName>
        <fullName>Uncharacterized membrane protein F35D11.3</fullName>
    </recommendedName>
</protein>
<accession>Q20035</accession>
<sequence length="617" mass="67343">MSKCATPTPSTSSNSSDEAKRSPQPMSRGFPQRNMSTTSSNGSNSPRHRSLETPIVLQPATRFALANLTTTVLRLDFWDDNDPNSIFFCKSTFNIVTQCLDLPEKVIKTVKTHLEGEEDLTDIAPMIMSVREDPVYKTEGSTPFLASLLVAFVNQGNYDSRYRVFLRHLTTLLGVVWTEFEDVEDSLASTLLEEQFVESEHSRTVREKTARNKKIKRYLMIGAAGGVGGVLIGLTGGLAAPLVAASAGMLIGGGAVAGLATTAGAAVLGTTMGVAGAGFTGYKMKKRVGAIEEFSVETLSEGVSLSCSLVVSGWIESDTSPDQAFVHQWRHLRHTKEQYTLRYESNYLMELGNAIEYLMSFAVSVAIQQTLLETALAGLVSAVAWPVALMSVSSVLDNPWNVCVSRAAEVGEQLAEVLLSRSHGKRPITLIGFSLGARVIFHCLLTMSKRSESVGIIEDVILLGAPVTASPKEWSKVCTVVSGRVINGYCETDWLLRFLYRTMSAQFRIAGTGPIDNRNSKKIYNYNLSHIVKGHMDYSKRLTEVLNAVGVKVGPHSEDSVVDLTQLEGPHEATGQAEEAINYQSTGEEEEHPIVHPINLENIHEVKVLDSPHKNEF</sequence>
<dbReference type="EMBL" id="FO081293">
    <property type="protein sequence ID" value="CCD70531.1"/>
    <property type="molecule type" value="Genomic_DNA"/>
</dbReference>
<dbReference type="PIR" id="T16263">
    <property type="entry name" value="T16263"/>
</dbReference>
<dbReference type="RefSeq" id="NP_494812.2">
    <property type="nucleotide sequence ID" value="NM_062411.5"/>
</dbReference>
<dbReference type="FunCoup" id="Q20035">
    <property type="interactions" value="389"/>
</dbReference>
<dbReference type="ESTHER" id="caeel-tmco4">
    <property type="family name" value="Duf_726"/>
</dbReference>
<dbReference type="PaxDb" id="6239-F35D11.3.1"/>
<dbReference type="EnsemblMetazoa" id="F35D11.3.1">
    <property type="protein sequence ID" value="F35D11.3.1"/>
    <property type="gene ID" value="WBGene00018044"/>
</dbReference>
<dbReference type="GeneID" id="173798"/>
<dbReference type="KEGG" id="cel:CELE_F35D11.3"/>
<dbReference type="UCSC" id="F35D11.3.1">
    <property type="organism name" value="c. elegans"/>
</dbReference>
<dbReference type="AGR" id="WB:WBGene00018044"/>
<dbReference type="CTD" id="173798"/>
<dbReference type="WormBase" id="F35D11.3">
    <property type="protein sequence ID" value="CE31803"/>
    <property type="gene ID" value="WBGene00018044"/>
</dbReference>
<dbReference type="eggNOG" id="KOG2385">
    <property type="taxonomic scope" value="Eukaryota"/>
</dbReference>
<dbReference type="GeneTree" id="ENSGT00390000001400"/>
<dbReference type="HOGENOM" id="CLU_016865_0_2_1"/>
<dbReference type="InParanoid" id="Q20035"/>
<dbReference type="OMA" id="AGLYSYC"/>
<dbReference type="OrthoDB" id="277931at2759"/>
<dbReference type="PhylomeDB" id="Q20035"/>
<dbReference type="PRO" id="PR:Q20035"/>
<dbReference type="Proteomes" id="UP000001940">
    <property type="component" value="Chromosome II"/>
</dbReference>
<dbReference type="Bgee" id="WBGene00018044">
    <property type="expression patterns" value="Expressed in material anatomical entity and 4 other cell types or tissues"/>
</dbReference>
<dbReference type="GO" id="GO:0016020">
    <property type="term" value="C:membrane"/>
    <property type="evidence" value="ECO:0007669"/>
    <property type="project" value="UniProtKB-SubCell"/>
</dbReference>
<dbReference type="InterPro" id="IPR029058">
    <property type="entry name" value="AB_hydrolase_fold"/>
</dbReference>
<dbReference type="InterPro" id="IPR007941">
    <property type="entry name" value="DUF726"/>
</dbReference>
<dbReference type="PANTHER" id="PTHR17920:SF3">
    <property type="entry name" value="TRANSMEMBRANE AND COILED-COIL DOMAIN-CONTAINING PROTEIN 4"/>
    <property type="match status" value="1"/>
</dbReference>
<dbReference type="PANTHER" id="PTHR17920">
    <property type="entry name" value="TRANSMEMBRANE AND COILED-COIL DOMAIN-CONTAINING PROTEIN 4 TMCO4"/>
    <property type="match status" value="1"/>
</dbReference>
<dbReference type="Pfam" id="PF05277">
    <property type="entry name" value="DUF726"/>
    <property type="match status" value="1"/>
</dbReference>
<dbReference type="SUPFAM" id="SSF53474">
    <property type="entry name" value="alpha/beta-Hydrolases"/>
    <property type="match status" value="1"/>
</dbReference>
<name>TMCO4_CAEEL</name>
<reference key="1">
    <citation type="journal article" date="1998" name="Science">
        <title>Genome sequence of the nematode C. elegans: a platform for investigating biology.</title>
        <authorList>
            <consortium name="The C. elegans sequencing consortium"/>
        </authorList>
    </citation>
    <scope>NUCLEOTIDE SEQUENCE [LARGE SCALE GENOMIC DNA]</scope>
    <source>
        <strain>Bristol N2</strain>
    </source>
</reference>
<keyword id="KW-0472">Membrane</keyword>
<keyword id="KW-1185">Reference proteome</keyword>
<keyword id="KW-0812">Transmembrane</keyword>
<keyword id="KW-1133">Transmembrane helix</keyword>
<organism>
    <name type="scientific">Caenorhabditis elegans</name>
    <dbReference type="NCBI Taxonomy" id="6239"/>
    <lineage>
        <taxon>Eukaryota</taxon>
        <taxon>Metazoa</taxon>
        <taxon>Ecdysozoa</taxon>
        <taxon>Nematoda</taxon>
        <taxon>Chromadorea</taxon>
        <taxon>Rhabditida</taxon>
        <taxon>Rhabditina</taxon>
        <taxon>Rhabditomorpha</taxon>
        <taxon>Rhabditoidea</taxon>
        <taxon>Rhabditidae</taxon>
        <taxon>Peloderinae</taxon>
        <taxon>Caenorhabditis</taxon>
    </lineage>
</organism>
<proteinExistence type="inferred from homology"/>
<feature type="chain" id="PRO_0000305152" description="Uncharacterized membrane protein F35D11.3">
    <location>
        <begin position="1"/>
        <end position="617"/>
    </location>
</feature>
<feature type="transmembrane region" description="Helical" evidence="1">
    <location>
        <begin position="219"/>
        <end position="239"/>
    </location>
</feature>
<feature type="transmembrane region" description="Helical" evidence="1">
    <location>
        <begin position="262"/>
        <end position="282"/>
    </location>
</feature>
<feature type="transmembrane region" description="Helical" evidence="1">
    <location>
        <begin position="427"/>
        <end position="447"/>
    </location>
</feature>
<feature type="region of interest" description="Disordered" evidence="2">
    <location>
        <begin position="1"/>
        <end position="49"/>
    </location>
</feature>
<feature type="compositionally biased region" description="Low complexity" evidence="2">
    <location>
        <begin position="1"/>
        <end position="16"/>
    </location>
</feature>
<feature type="compositionally biased region" description="Low complexity" evidence="2">
    <location>
        <begin position="36"/>
        <end position="45"/>
    </location>
</feature>